<sequence>MSGKHPLVQAIENSQLKTDLPEFAPGDTVVVQVKVKEGDRERLQAFEGVVIAKKNRGLNSAFTVRKISSGVGVERVFQTHSPVVAKIEVKRRGDVRRAKLYYLRDLSGKAARIREKLPARKA</sequence>
<accession>B7IAS9</accession>
<feature type="chain" id="PRO_1000193775" description="Large ribosomal subunit protein bL19">
    <location>
        <begin position="1"/>
        <end position="122"/>
    </location>
</feature>
<feature type="helix" evidence="3">
    <location>
        <begin position="6"/>
        <end position="13"/>
    </location>
</feature>
<feature type="strand" evidence="3">
    <location>
        <begin position="28"/>
        <end position="37"/>
    </location>
</feature>
<feature type="strand" evidence="3">
    <location>
        <begin position="40"/>
        <end position="54"/>
    </location>
</feature>
<feature type="helix" evidence="3">
    <location>
        <begin position="57"/>
        <end position="59"/>
    </location>
</feature>
<feature type="strand" evidence="3">
    <location>
        <begin position="61"/>
        <end position="68"/>
    </location>
</feature>
<feature type="strand" evidence="3">
    <location>
        <begin position="71"/>
        <end position="78"/>
    </location>
</feature>
<feature type="strand" evidence="3">
    <location>
        <begin position="84"/>
        <end position="91"/>
    </location>
</feature>
<feature type="strand" evidence="3">
    <location>
        <begin position="96"/>
        <end position="98"/>
    </location>
</feature>
<feature type="helix" evidence="3">
    <location>
        <begin position="101"/>
        <end position="104"/>
    </location>
</feature>
<feature type="turn" evidence="3">
    <location>
        <begin position="108"/>
        <end position="111"/>
    </location>
</feature>
<gene>
    <name evidence="1" type="primary">rplS</name>
    <name type="ordered locus">AB57_3615</name>
</gene>
<name>RL19_ACIB5</name>
<organism>
    <name type="scientific">Acinetobacter baumannii (strain AB0057)</name>
    <dbReference type="NCBI Taxonomy" id="480119"/>
    <lineage>
        <taxon>Bacteria</taxon>
        <taxon>Pseudomonadati</taxon>
        <taxon>Pseudomonadota</taxon>
        <taxon>Gammaproteobacteria</taxon>
        <taxon>Moraxellales</taxon>
        <taxon>Moraxellaceae</taxon>
        <taxon>Acinetobacter</taxon>
        <taxon>Acinetobacter calcoaceticus/baumannii complex</taxon>
    </lineage>
</organism>
<dbReference type="EMBL" id="CP001182">
    <property type="protein sequence ID" value="ACJ42976.1"/>
    <property type="molecule type" value="Genomic_DNA"/>
</dbReference>
<dbReference type="RefSeq" id="WP_000014562.1">
    <property type="nucleotide sequence ID" value="NC_011586.2"/>
</dbReference>
<dbReference type="PDB" id="6V39">
    <property type="method" value="EM"/>
    <property type="resolution" value="3.04 A"/>
    <property type="chains" value="O=1-122"/>
</dbReference>
<dbReference type="PDB" id="6V3A">
    <property type="method" value="EM"/>
    <property type="resolution" value="2.82 A"/>
    <property type="chains" value="O=1-122"/>
</dbReference>
<dbReference type="PDB" id="6V3B">
    <property type="method" value="EM"/>
    <property type="resolution" value="2.91 A"/>
    <property type="chains" value="O=1-122"/>
</dbReference>
<dbReference type="PDB" id="6V3D">
    <property type="method" value="EM"/>
    <property type="resolution" value="2.95 A"/>
    <property type="chains" value="O=1-122"/>
</dbReference>
<dbReference type="PDB" id="7M4V">
    <property type="method" value="EM"/>
    <property type="resolution" value="2.54 A"/>
    <property type="chains" value="O=1-122"/>
</dbReference>
<dbReference type="PDB" id="7M4W">
    <property type="method" value="EM"/>
    <property type="resolution" value="2.55 A"/>
    <property type="chains" value="O=1-122"/>
</dbReference>
<dbReference type="PDB" id="7M4X">
    <property type="method" value="EM"/>
    <property type="resolution" value="2.66 A"/>
    <property type="chains" value="O=1-122"/>
</dbReference>
<dbReference type="PDB" id="7M4Y">
    <property type="method" value="EM"/>
    <property type="resolution" value="2.50 A"/>
    <property type="chains" value="O=1-122"/>
</dbReference>
<dbReference type="PDB" id="7M4Z">
    <property type="method" value="EM"/>
    <property type="resolution" value="2.92 A"/>
    <property type="chains" value="O=1-122"/>
</dbReference>
<dbReference type="PDB" id="7RYF">
    <property type="method" value="EM"/>
    <property type="resolution" value="2.65 A"/>
    <property type="chains" value="O=1-122"/>
</dbReference>
<dbReference type="PDB" id="7RYG">
    <property type="method" value="EM"/>
    <property type="resolution" value="2.38 A"/>
    <property type="chains" value="O=1-122"/>
</dbReference>
<dbReference type="PDB" id="7RYH">
    <property type="method" value="EM"/>
    <property type="resolution" value="2.43 A"/>
    <property type="chains" value="O=1-122"/>
</dbReference>
<dbReference type="PDB" id="7UVV">
    <property type="method" value="EM"/>
    <property type="resolution" value="2.50 A"/>
    <property type="chains" value="O=1-122"/>
</dbReference>
<dbReference type="PDB" id="7UVW">
    <property type="method" value="EM"/>
    <property type="resolution" value="2.37 A"/>
    <property type="chains" value="O=1-122"/>
</dbReference>
<dbReference type="PDB" id="7UVX">
    <property type="method" value="EM"/>
    <property type="resolution" value="2.35 A"/>
    <property type="chains" value="O=1-122"/>
</dbReference>
<dbReference type="PDB" id="7UVY">
    <property type="method" value="EM"/>
    <property type="resolution" value="2.39 A"/>
    <property type="chains" value="O=1-122"/>
</dbReference>
<dbReference type="PDB" id="7UVZ">
    <property type="method" value="EM"/>
    <property type="resolution" value="2.21 A"/>
    <property type="chains" value="O=1-122"/>
</dbReference>
<dbReference type="PDB" id="7UW1">
    <property type="method" value="EM"/>
    <property type="resolution" value="2.21 A"/>
    <property type="chains" value="O=1-122"/>
</dbReference>
<dbReference type="PDBsum" id="6V39"/>
<dbReference type="PDBsum" id="6V3A"/>
<dbReference type="PDBsum" id="6V3B"/>
<dbReference type="PDBsum" id="6V3D"/>
<dbReference type="PDBsum" id="7M4V"/>
<dbReference type="PDBsum" id="7M4W"/>
<dbReference type="PDBsum" id="7M4X"/>
<dbReference type="PDBsum" id="7M4Y"/>
<dbReference type="PDBsum" id="7M4Z"/>
<dbReference type="PDBsum" id="7RYF"/>
<dbReference type="PDBsum" id="7RYG"/>
<dbReference type="PDBsum" id="7RYH"/>
<dbReference type="PDBsum" id="7UVV"/>
<dbReference type="PDBsum" id="7UVW"/>
<dbReference type="PDBsum" id="7UVX"/>
<dbReference type="PDBsum" id="7UVY"/>
<dbReference type="PDBsum" id="7UVZ"/>
<dbReference type="PDBsum" id="7UW1"/>
<dbReference type="EMDB" id="EMD-21030"/>
<dbReference type="EMDB" id="EMD-21031"/>
<dbReference type="EMDB" id="EMD-21032"/>
<dbReference type="EMDB" id="EMD-21033"/>
<dbReference type="EMDB" id="EMD-23667"/>
<dbReference type="EMDB" id="EMD-23668"/>
<dbReference type="EMDB" id="EMD-23669"/>
<dbReference type="EMDB" id="EMD-23670"/>
<dbReference type="EMDB" id="EMD-23671"/>
<dbReference type="EMDB" id="EMD-24738"/>
<dbReference type="EMDB" id="EMD-24739"/>
<dbReference type="EMDB" id="EMD-24740"/>
<dbReference type="EMDB" id="EMD-26817"/>
<dbReference type="EMDB" id="EMD-26818"/>
<dbReference type="EMDB" id="EMD-26819"/>
<dbReference type="EMDB" id="EMD-26820"/>
<dbReference type="EMDB" id="EMD-26821"/>
<dbReference type="EMDB" id="EMD-26822"/>
<dbReference type="SMR" id="B7IAS9"/>
<dbReference type="IntAct" id="B7IAS9">
    <property type="interactions" value="2"/>
</dbReference>
<dbReference type="GeneID" id="92895396"/>
<dbReference type="KEGG" id="abn:AB57_3615"/>
<dbReference type="HOGENOM" id="CLU_103507_2_2_6"/>
<dbReference type="Proteomes" id="UP000007094">
    <property type="component" value="Chromosome"/>
</dbReference>
<dbReference type="GO" id="GO:0022625">
    <property type="term" value="C:cytosolic large ribosomal subunit"/>
    <property type="evidence" value="ECO:0007669"/>
    <property type="project" value="TreeGrafter"/>
</dbReference>
<dbReference type="GO" id="GO:0003735">
    <property type="term" value="F:structural constituent of ribosome"/>
    <property type="evidence" value="ECO:0007669"/>
    <property type="project" value="InterPro"/>
</dbReference>
<dbReference type="GO" id="GO:0006412">
    <property type="term" value="P:translation"/>
    <property type="evidence" value="ECO:0007669"/>
    <property type="project" value="UniProtKB-UniRule"/>
</dbReference>
<dbReference type="FunFam" id="2.30.30.790:FF:000001">
    <property type="entry name" value="50S ribosomal protein L19"/>
    <property type="match status" value="1"/>
</dbReference>
<dbReference type="Gene3D" id="2.30.30.790">
    <property type="match status" value="1"/>
</dbReference>
<dbReference type="HAMAP" id="MF_00402">
    <property type="entry name" value="Ribosomal_bL19"/>
    <property type="match status" value="1"/>
</dbReference>
<dbReference type="InterPro" id="IPR001857">
    <property type="entry name" value="Ribosomal_bL19"/>
</dbReference>
<dbReference type="InterPro" id="IPR018257">
    <property type="entry name" value="Ribosomal_bL19_CS"/>
</dbReference>
<dbReference type="InterPro" id="IPR038657">
    <property type="entry name" value="Ribosomal_bL19_sf"/>
</dbReference>
<dbReference type="InterPro" id="IPR008991">
    <property type="entry name" value="Translation_prot_SH3-like_sf"/>
</dbReference>
<dbReference type="NCBIfam" id="TIGR01024">
    <property type="entry name" value="rplS_bact"/>
    <property type="match status" value="1"/>
</dbReference>
<dbReference type="PANTHER" id="PTHR15680:SF9">
    <property type="entry name" value="LARGE RIBOSOMAL SUBUNIT PROTEIN BL19M"/>
    <property type="match status" value="1"/>
</dbReference>
<dbReference type="PANTHER" id="PTHR15680">
    <property type="entry name" value="RIBOSOMAL PROTEIN L19"/>
    <property type="match status" value="1"/>
</dbReference>
<dbReference type="Pfam" id="PF01245">
    <property type="entry name" value="Ribosomal_L19"/>
    <property type="match status" value="1"/>
</dbReference>
<dbReference type="PIRSF" id="PIRSF002191">
    <property type="entry name" value="Ribosomal_L19"/>
    <property type="match status" value="1"/>
</dbReference>
<dbReference type="PRINTS" id="PR00061">
    <property type="entry name" value="RIBOSOMALL19"/>
</dbReference>
<dbReference type="SUPFAM" id="SSF50104">
    <property type="entry name" value="Translation proteins SH3-like domain"/>
    <property type="match status" value="1"/>
</dbReference>
<dbReference type="PROSITE" id="PS01015">
    <property type="entry name" value="RIBOSOMAL_L19"/>
    <property type="match status" value="1"/>
</dbReference>
<comment type="function">
    <text evidence="1">This protein is located at the 30S-50S ribosomal subunit interface and may play a role in the structure and function of the aminoacyl-tRNA binding site.</text>
</comment>
<comment type="similarity">
    <text evidence="1">Belongs to the bacterial ribosomal protein bL19 family.</text>
</comment>
<evidence type="ECO:0000255" key="1">
    <source>
        <dbReference type="HAMAP-Rule" id="MF_00402"/>
    </source>
</evidence>
<evidence type="ECO:0000305" key="2"/>
<evidence type="ECO:0007829" key="3">
    <source>
        <dbReference type="PDB" id="7M4V"/>
    </source>
</evidence>
<protein>
    <recommendedName>
        <fullName evidence="1">Large ribosomal subunit protein bL19</fullName>
    </recommendedName>
    <alternativeName>
        <fullName evidence="2">50S ribosomal protein L19</fullName>
    </alternativeName>
</protein>
<proteinExistence type="evidence at protein level"/>
<reference key="1">
    <citation type="journal article" date="2008" name="J. Bacteriol.">
        <title>Comparative genome sequence analysis of multidrug-resistant Acinetobacter baumannii.</title>
        <authorList>
            <person name="Adams M.D."/>
            <person name="Goglin K."/>
            <person name="Molyneaux N."/>
            <person name="Hujer K.M."/>
            <person name="Lavender H."/>
            <person name="Jamison J.J."/>
            <person name="MacDonald I.J."/>
            <person name="Martin K.M."/>
            <person name="Russo T."/>
            <person name="Campagnari A.A."/>
            <person name="Hujer A.M."/>
            <person name="Bonomo R.A."/>
            <person name="Gill S.R."/>
        </authorList>
    </citation>
    <scope>NUCLEOTIDE SEQUENCE [LARGE SCALE GENOMIC DNA]</scope>
    <source>
        <strain>AB0057</strain>
    </source>
</reference>
<keyword id="KW-0002">3D-structure</keyword>
<keyword id="KW-0687">Ribonucleoprotein</keyword>
<keyword id="KW-0689">Ribosomal protein</keyword>